<accession>A5VZ23</accession>
<sequence length="95" mass="10392">MALERCDVEKIAHLARLGLNDGELPRITDALNSILGLVDQMQAVDTTGIEPLAHPLEASQRLRPDQVTESNQRDAYQAIAPSTESGLYLVPKVIE</sequence>
<protein>
    <recommendedName>
        <fullName evidence="1">Aspartyl/glutamyl-tRNA(Asn/Gln) amidotransferase subunit C</fullName>
        <shortName evidence="1">Asp/Glu-ADT subunit C</shortName>
        <ecNumber evidence="1">6.3.5.-</ecNumber>
    </recommendedName>
</protein>
<proteinExistence type="inferred from homology"/>
<comment type="function">
    <text evidence="1">Allows the formation of correctly charged Asn-tRNA(Asn) or Gln-tRNA(Gln) through the transamidation of misacylated Asp-tRNA(Asn) or Glu-tRNA(Gln) in organisms which lack either or both of asparaginyl-tRNA or glutaminyl-tRNA synthetases. The reaction takes place in the presence of glutamine and ATP through an activated phospho-Asp-tRNA(Asn) or phospho-Glu-tRNA(Gln).</text>
</comment>
<comment type="catalytic activity">
    <reaction evidence="1">
        <text>L-glutamyl-tRNA(Gln) + L-glutamine + ATP + H2O = L-glutaminyl-tRNA(Gln) + L-glutamate + ADP + phosphate + H(+)</text>
        <dbReference type="Rhea" id="RHEA:17521"/>
        <dbReference type="Rhea" id="RHEA-COMP:9681"/>
        <dbReference type="Rhea" id="RHEA-COMP:9684"/>
        <dbReference type="ChEBI" id="CHEBI:15377"/>
        <dbReference type="ChEBI" id="CHEBI:15378"/>
        <dbReference type="ChEBI" id="CHEBI:29985"/>
        <dbReference type="ChEBI" id="CHEBI:30616"/>
        <dbReference type="ChEBI" id="CHEBI:43474"/>
        <dbReference type="ChEBI" id="CHEBI:58359"/>
        <dbReference type="ChEBI" id="CHEBI:78520"/>
        <dbReference type="ChEBI" id="CHEBI:78521"/>
        <dbReference type="ChEBI" id="CHEBI:456216"/>
    </reaction>
</comment>
<comment type="catalytic activity">
    <reaction evidence="1">
        <text>L-aspartyl-tRNA(Asn) + L-glutamine + ATP + H2O = L-asparaginyl-tRNA(Asn) + L-glutamate + ADP + phosphate + 2 H(+)</text>
        <dbReference type="Rhea" id="RHEA:14513"/>
        <dbReference type="Rhea" id="RHEA-COMP:9674"/>
        <dbReference type="Rhea" id="RHEA-COMP:9677"/>
        <dbReference type="ChEBI" id="CHEBI:15377"/>
        <dbReference type="ChEBI" id="CHEBI:15378"/>
        <dbReference type="ChEBI" id="CHEBI:29985"/>
        <dbReference type="ChEBI" id="CHEBI:30616"/>
        <dbReference type="ChEBI" id="CHEBI:43474"/>
        <dbReference type="ChEBI" id="CHEBI:58359"/>
        <dbReference type="ChEBI" id="CHEBI:78515"/>
        <dbReference type="ChEBI" id="CHEBI:78516"/>
        <dbReference type="ChEBI" id="CHEBI:456216"/>
    </reaction>
</comment>
<comment type="subunit">
    <text evidence="1">Heterotrimer of A, B and C subunits.</text>
</comment>
<comment type="similarity">
    <text evidence="1">Belongs to the GatC family.</text>
</comment>
<organism>
    <name type="scientific">Pseudomonas putida (strain ATCC 700007 / DSM 6899 / JCM 31910 / BCRC 17059 / LMG 24140 / F1)</name>
    <dbReference type="NCBI Taxonomy" id="351746"/>
    <lineage>
        <taxon>Bacteria</taxon>
        <taxon>Pseudomonadati</taxon>
        <taxon>Pseudomonadota</taxon>
        <taxon>Gammaproteobacteria</taxon>
        <taxon>Pseudomonadales</taxon>
        <taxon>Pseudomonadaceae</taxon>
        <taxon>Pseudomonas</taxon>
    </lineage>
</organism>
<feature type="chain" id="PRO_1000016183" description="Aspartyl/glutamyl-tRNA(Asn/Gln) amidotransferase subunit C">
    <location>
        <begin position="1"/>
        <end position="95"/>
    </location>
</feature>
<keyword id="KW-0067">ATP-binding</keyword>
<keyword id="KW-0436">Ligase</keyword>
<keyword id="KW-0547">Nucleotide-binding</keyword>
<keyword id="KW-0648">Protein biosynthesis</keyword>
<evidence type="ECO:0000255" key="1">
    <source>
        <dbReference type="HAMAP-Rule" id="MF_00122"/>
    </source>
</evidence>
<name>GATC_PSEP1</name>
<reference key="1">
    <citation type="submission" date="2007-05" db="EMBL/GenBank/DDBJ databases">
        <title>Complete sequence of Pseudomonas putida F1.</title>
        <authorList>
            <consortium name="US DOE Joint Genome Institute"/>
            <person name="Copeland A."/>
            <person name="Lucas S."/>
            <person name="Lapidus A."/>
            <person name="Barry K."/>
            <person name="Detter J.C."/>
            <person name="Glavina del Rio T."/>
            <person name="Hammon N."/>
            <person name="Israni S."/>
            <person name="Dalin E."/>
            <person name="Tice H."/>
            <person name="Pitluck S."/>
            <person name="Chain P."/>
            <person name="Malfatti S."/>
            <person name="Shin M."/>
            <person name="Vergez L."/>
            <person name="Schmutz J."/>
            <person name="Larimer F."/>
            <person name="Land M."/>
            <person name="Hauser L."/>
            <person name="Kyrpides N."/>
            <person name="Lykidis A."/>
            <person name="Parales R."/>
            <person name="Richardson P."/>
        </authorList>
    </citation>
    <scope>NUCLEOTIDE SEQUENCE [LARGE SCALE GENOMIC DNA]</scope>
    <source>
        <strain>ATCC 700007 / DSM 6899 / JCM 31910 / BCRC 17059 / LMG 24140 / F1</strain>
    </source>
</reference>
<dbReference type="EC" id="6.3.5.-" evidence="1"/>
<dbReference type="EMBL" id="CP000712">
    <property type="protein sequence ID" value="ABQ77133.1"/>
    <property type="molecule type" value="Genomic_DNA"/>
</dbReference>
<dbReference type="SMR" id="A5VZ23"/>
<dbReference type="KEGG" id="ppf:Pput_0972"/>
<dbReference type="eggNOG" id="COG0721">
    <property type="taxonomic scope" value="Bacteria"/>
</dbReference>
<dbReference type="HOGENOM" id="CLU_105899_2_2_6"/>
<dbReference type="GO" id="GO:0050566">
    <property type="term" value="F:asparaginyl-tRNA synthase (glutamine-hydrolyzing) activity"/>
    <property type="evidence" value="ECO:0007669"/>
    <property type="project" value="RHEA"/>
</dbReference>
<dbReference type="GO" id="GO:0005524">
    <property type="term" value="F:ATP binding"/>
    <property type="evidence" value="ECO:0007669"/>
    <property type="project" value="UniProtKB-KW"/>
</dbReference>
<dbReference type="GO" id="GO:0050567">
    <property type="term" value="F:glutaminyl-tRNA synthase (glutamine-hydrolyzing) activity"/>
    <property type="evidence" value="ECO:0007669"/>
    <property type="project" value="UniProtKB-UniRule"/>
</dbReference>
<dbReference type="GO" id="GO:0070681">
    <property type="term" value="P:glutaminyl-tRNAGln biosynthesis via transamidation"/>
    <property type="evidence" value="ECO:0007669"/>
    <property type="project" value="TreeGrafter"/>
</dbReference>
<dbReference type="GO" id="GO:0006450">
    <property type="term" value="P:regulation of translational fidelity"/>
    <property type="evidence" value="ECO:0007669"/>
    <property type="project" value="InterPro"/>
</dbReference>
<dbReference type="GO" id="GO:0006412">
    <property type="term" value="P:translation"/>
    <property type="evidence" value="ECO:0007669"/>
    <property type="project" value="UniProtKB-UniRule"/>
</dbReference>
<dbReference type="Gene3D" id="1.10.20.60">
    <property type="entry name" value="Glu-tRNAGln amidotransferase C subunit, N-terminal domain"/>
    <property type="match status" value="1"/>
</dbReference>
<dbReference type="HAMAP" id="MF_00122">
    <property type="entry name" value="GatC"/>
    <property type="match status" value="1"/>
</dbReference>
<dbReference type="InterPro" id="IPR036113">
    <property type="entry name" value="Asp/Glu-ADT_sf_sub_c"/>
</dbReference>
<dbReference type="InterPro" id="IPR003837">
    <property type="entry name" value="GatC"/>
</dbReference>
<dbReference type="NCBIfam" id="TIGR00135">
    <property type="entry name" value="gatC"/>
    <property type="match status" value="1"/>
</dbReference>
<dbReference type="PANTHER" id="PTHR15004">
    <property type="entry name" value="GLUTAMYL-TRNA(GLN) AMIDOTRANSFERASE SUBUNIT C, MITOCHONDRIAL"/>
    <property type="match status" value="1"/>
</dbReference>
<dbReference type="PANTHER" id="PTHR15004:SF0">
    <property type="entry name" value="GLUTAMYL-TRNA(GLN) AMIDOTRANSFERASE SUBUNIT C, MITOCHONDRIAL"/>
    <property type="match status" value="1"/>
</dbReference>
<dbReference type="Pfam" id="PF02686">
    <property type="entry name" value="GatC"/>
    <property type="match status" value="1"/>
</dbReference>
<dbReference type="SUPFAM" id="SSF141000">
    <property type="entry name" value="Glu-tRNAGln amidotransferase C subunit"/>
    <property type="match status" value="1"/>
</dbReference>
<gene>
    <name evidence="1" type="primary">gatC</name>
    <name type="ordered locus">Pput_0972</name>
</gene>